<gene>
    <name type="primary">ALG14</name>
    <name type="ordered locus">CNBB3880</name>
</gene>
<protein>
    <recommendedName>
        <fullName>UDP-N-acetylglucosamine transferase subunit ALG14</fullName>
    </recommendedName>
    <alternativeName>
        <fullName>Asparagine-linked glycosylation protein 14</fullName>
    </alternativeName>
</protein>
<reference key="1">
    <citation type="journal article" date="2005" name="Science">
        <title>The genome of the basidiomycetous yeast and human pathogen Cryptococcus neoformans.</title>
        <authorList>
            <person name="Loftus B.J."/>
            <person name="Fung E."/>
            <person name="Roncaglia P."/>
            <person name="Rowley D."/>
            <person name="Amedeo P."/>
            <person name="Bruno D."/>
            <person name="Vamathevan J."/>
            <person name="Miranda M."/>
            <person name="Anderson I.J."/>
            <person name="Fraser J.A."/>
            <person name="Allen J.E."/>
            <person name="Bosdet I.E."/>
            <person name="Brent M.R."/>
            <person name="Chiu R."/>
            <person name="Doering T.L."/>
            <person name="Donlin M.J."/>
            <person name="D'Souza C.A."/>
            <person name="Fox D.S."/>
            <person name="Grinberg V."/>
            <person name="Fu J."/>
            <person name="Fukushima M."/>
            <person name="Haas B.J."/>
            <person name="Huang J.C."/>
            <person name="Janbon G."/>
            <person name="Jones S.J.M."/>
            <person name="Koo H.L."/>
            <person name="Krzywinski M.I."/>
            <person name="Kwon-Chung K.J."/>
            <person name="Lengeler K.B."/>
            <person name="Maiti R."/>
            <person name="Marra M.A."/>
            <person name="Marra R.E."/>
            <person name="Mathewson C.A."/>
            <person name="Mitchell T.G."/>
            <person name="Pertea M."/>
            <person name="Riggs F.R."/>
            <person name="Salzberg S.L."/>
            <person name="Schein J.E."/>
            <person name="Shvartsbeyn A."/>
            <person name="Shin H."/>
            <person name="Shumway M."/>
            <person name="Specht C.A."/>
            <person name="Suh B.B."/>
            <person name="Tenney A."/>
            <person name="Utterback T.R."/>
            <person name="Wickes B.L."/>
            <person name="Wortman J.R."/>
            <person name="Wye N.H."/>
            <person name="Kronstad J.W."/>
            <person name="Lodge J.K."/>
            <person name="Heitman J."/>
            <person name="Davis R.W."/>
            <person name="Fraser C.M."/>
            <person name="Hyman R.W."/>
        </authorList>
    </citation>
    <scope>NUCLEOTIDE SEQUENCE [LARGE SCALE GENOMIC DNA]</scope>
    <source>
        <strain>B-3501A</strain>
    </source>
</reference>
<organism>
    <name type="scientific">Cryptococcus neoformans var. neoformans serotype D (strain B-3501A)</name>
    <name type="common">Filobasidiella neoformans</name>
    <dbReference type="NCBI Taxonomy" id="283643"/>
    <lineage>
        <taxon>Eukaryota</taxon>
        <taxon>Fungi</taxon>
        <taxon>Dikarya</taxon>
        <taxon>Basidiomycota</taxon>
        <taxon>Agaricomycotina</taxon>
        <taxon>Tremellomycetes</taxon>
        <taxon>Tremellales</taxon>
        <taxon>Cryptococcaceae</taxon>
        <taxon>Cryptococcus</taxon>
        <taxon>Cryptococcus neoformans species complex</taxon>
    </lineage>
</organism>
<sequence>MSLGRYIGWSILAFTYLVLAILLRLIFLQPSKTSRASYRPKDAKCSLGVFLGSGGHTSEMKALLSTLDYERYQPRTYIYCHGDDLSLRAVSDIESSKGGLISSKMYYLLSLPRARRVGQPLLSTMVSVLKTLYIAALRLFLIPLLKNPRRPFVDLLIVNGPGTCVVLVLVSYIRRVRLEYTRIIYVESFARVKSLSLSGKMIRPLADRFLVQWPDASDSDNVIHKGLLV</sequence>
<keyword id="KW-0256">Endoplasmic reticulum</keyword>
<keyword id="KW-0472">Membrane</keyword>
<keyword id="KW-0539">Nucleus</keyword>
<keyword id="KW-0812">Transmembrane</keyword>
<keyword id="KW-1133">Transmembrane helix</keyword>
<dbReference type="EMBL" id="AAEY01000010">
    <property type="protein sequence ID" value="EAL22510.1"/>
    <property type="molecule type" value="Genomic_DNA"/>
</dbReference>
<dbReference type="RefSeq" id="XP_777157.1">
    <property type="nucleotide sequence ID" value="XM_772064.1"/>
</dbReference>
<dbReference type="GeneID" id="4934482"/>
<dbReference type="KEGG" id="cnb:CNBB3880"/>
<dbReference type="VEuPathDB" id="FungiDB:CNBB3880"/>
<dbReference type="HOGENOM" id="CLU_064541_0_1_1"/>
<dbReference type="OrthoDB" id="3521at5206"/>
<dbReference type="GO" id="GO:0031965">
    <property type="term" value="C:nuclear membrane"/>
    <property type="evidence" value="ECO:0007669"/>
    <property type="project" value="UniProtKB-SubCell"/>
</dbReference>
<dbReference type="GO" id="GO:0043541">
    <property type="term" value="C:UDP-N-acetylglucosamine transferase complex"/>
    <property type="evidence" value="ECO:0007669"/>
    <property type="project" value="TreeGrafter"/>
</dbReference>
<dbReference type="GO" id="GO:0004577">
    <property type="term" value="F:N-acetylglucosaminyldiphosphodolichol N-acetylglucosaminyltransferase activity"/>
    <property type="evidence" value="ECO:0007669"/>
    <property type="project" value="TreeGrafter"/>
</dbReference>
<dbReference type="GO" id="GO:0006488">
    <property type="term" value="P:dolichol-linked oligosaccharide biosynthetic process"/>
    <property type="evidence" value="ECO:0007669"/>
    <property type="project" value="InterPro"/>
</dbReference>
<dbReference type="FunFam" id="3.40.50.2000:FF:000289">
    <property type="entry name" value="UDP-N-acetylglucosamine transferase subunit ALG14"/>
    <property type="match status" value="1"/>
</dbReference>
<dbReference type="Gene3D" id="3.40.50.2000">
    <property type="entry name" value="Glycogen Phosphorylase B"/>
    <property type="match status" value="1"/>
</dbReference>
<dbReference type="InterPro" id="IPR013969">
    <property type="entry name" value="Oligosacch_biosynth_Alg14"/>
</dbReference>
<dbReference type="PANTHER" id="PTHR12154">
    <property type="entry name" value="GLYCOSYL TRANSFERASE-RELATED"/>
    <property type="match status" value="1"/>
</dbReference>
<dbReference type="PANTHER" id="PTHR12154:SF4">
    <property type="entry name" value="UDP-N-ACETYLGLUCOSAMINE TRANSFERASE SUBUNIT ALG14 HOMOLOG"/>
    <property type="match status" value="1"/>
</dbReference>
<dbReference type="Pfam" id="PF08660">
    <property type="entry name" value="Alg14"/>
    <property type="match status" value="1"/>
</dbReference>
<comment type="function">
    <text evidence="1">Involved in protein N-glycosylation. Essential for the second step of the dolichol-linked oligosaccharide pathway. Anchors the catalytic subunit ALG13 to the ER (By similarity).</text>
</comment>
<comment type="subunit">
    <text evidence="1">Heterodimer with ALG13 to form a functional enzyme.</text>
</comment>
<comment type="subcellular location">
    <subcellularLocation>
        <location evidence="2">Endoplasmic reticulum membrane</location>
        <topology evidence="3">Single-pass membrane protein</topology>
    </subcellularLocation>
    <subcellularLocation>
        <location evidence="2">Nucleus membrane</location>
        <topology evidence="3">Single-pass membrane protein</topology>
    </subcellularLocation>
</comment>
<comment type="similarity">
    <text evidence="4">Belongs to the ALG14 family.</text>
</comment>
<proteinExistence type="inferred from homology"/>
<accession>P0CM11</accession>
<accession>Q55XH5</accession>
<accession>Q5KMF9</accession>
<evidence type="ECO:0000250" key="1"/>
<evidence type="ECO:0000250" key="2">
    <source>
        <dbReference type="UniProtKB" id="P38242"/>
    </source>
</evidence>
<evidence type="ECO:0000255" key="3"/>
<evidence type="ECO:0000305" key="4"/>
<name>ALG14_CRYNB</name>
<feature type="chain" id="PRO_0000410006" description="UDP-N-acetylglucosamine transferase subunit ALG14">
    <location>
        <begin position="1"/>
        <end position="229"/>
    </location>
</feature>
<feature type="topological domain" description="Lumenal" evidence="2">
    <location>
        <begin position="1"/>
        <end position="6"/>
    </location>
</feature>
<feature type="transmembrane region" description="Helical" evidence="3">
    <location>
        <begin position="7"/>
        <end position="27"/>
    </location>
</feature>
<feature type="topological domain" description="Cytoplasmic" evidence="2">
    <location>
        <begin position="28"/>
        <end position="229"/>
    </location>
</feature>